<reference key="1">
    <citation type="journal article" date="2009" name="Appl. Environ. Microbiol.">
        <title>Three genomes from the phylum Acidobacteria provide insight into the lifestyles of these microorganisms in soils.</title>
        <authorList>
            <person name="Ward N.L."/>
            <person name="Challacombe J.F."/>
            <person name="Janssen P.H."/>
            <person name="Henrissat B."/>
            <person name="Coutinho P.M."/>
            <person name="Wu M."/>
            <person name="Xie G."/>
            <person name="Haft D.H."/>
            <person name="Sait M."/>
            <person name="Badger J."/>
            <person name="Barabote R.D."/>
            <person name="Bradley B."/>
            <person name="Brettin T.S."/>
            <person name="Brinkac L.M."/>
            <person name="Bruce D."/>
            <person name="Creasy T."/>
            <person name="Daugherty S.C."/>
            <person name="Davidsen T.M."/>
            <person name="DeBoy R.T."/>
            <person name="Detter J.C."/>
            <person name="Dodson R.J."/>
            <person name="Durkin A.S."/>
            <person name="Ganapathy A."/>
            <person name="Gwinn-Giglio M."/>
            <person name="Han C.S."/>
            <person name="Khouri H."/>
            <person name="Kiss H."/>
            <person name="Kothari S.P."/>
            <person name="Madupu R."/>
            <person name="Nelson K.E."/>
            <person name="Nelson W.C."/>
            <person name="Paulsen I."/>
            <person name="Penn K."/>
            <person name="Ren Q."/>
            <person name="Rosovitz M.J."/>
            <person name="Selengut J.D."/>
            <person name="Shrivastava S."/>
            <person name="Sullivan S.A."/>
            <person name="Tapia R."/>
            <person name="Thompson L.S."/>
            <person name="Watkins K.L."/>
            <person name="Yang Q."/>
            <person name="Yu C."/>
            <person name="Zafar N."/>
            <person name="Zhou L."/>
            <person name="Kuske C.R."/>
        </authorList>
    </citation>
    <scope>NUCLEOTIDE SEQUENCE [LARGE SCALE GENOMIC DNA]</scope>
    <source>
        <strain>Ellin6076</strain>
    </source>
</reference>
<sequence>MEKQSNDAAVAGAPNDHGAAKCPVAHTAHGRRNRDWWPDALDISTLHRNSSLSDPMGSGFDYAMEFESLDLQAVIKDLHALMTDSQDWWPADFGHYGGLMIRMAWHSAGTYRITDGRGGAGAGQQRFAPLNSWPDNANLDKARRLLWPVKQKYGDKISWADLMVLAGNVALESMGFKTFGFAGGRSDVWEPEELYWGPEGTWLGDERYSGERQLSEPLGAVQMGLIYVNPEGPNGNPDPVAAAKDIRETFFRMAMNDEETVALIAGGHTFGKTHGAGDPSLVGPDPESGALEDQGLGWKSKFGTGFGADAITGGPEVTWSQTPTQWSNSFFKNLFENEWELTNSPAGAKQWRAKNGQATIPDPFDKSKKRVPTMLTTDLSLRFDPAYEKISRRFYENPDQFADAFARAWFKLTHRDMGPIARYLGPLVPKETLLWQDPIPPVDHPLIDENDASALKAKILASGLSTSDLVSTAWASASTFRGSDKRGGANGARIRLAPQKDWEVNQPKQLAKVLEKLETIGKEFGKKVSLADLIVLGGDAAIEKAAKDAGVEVKIPFTPGRMDASQEQTDVASFAPLEPKADGFRNYIGRKTQFLQPEEALVDRAQLLRLTGPEMTVLVGGLRVLGANTAGSKHGVFTATPGVLTNDFFVNLLDMRTHWQPAGGEEGVYEGRDRKTNALKWTGTRVDLIFGSHSQLRAFAEVYAWAGSKEKFVKDFAAAWNKVMNLDRYDVARTGETKKAAVV</sequence>
<organism>
    <name type="scientific">Solibacter usitatus (strain Ellin6076)</name>
    <dbReference type="NCBI Taxonomy" id="234267"/>
    <lineage>
        <taxon>Bacteria</taxon>
        <taxon>Pseudomonadati</taxon>
        <taxon>Acidobacteriota</taxon>
        <taxon>Terriglobia</taxon>
        <taxon>Bryobacterales</taxon>
        <taxon>Solibacteraceae</taxon>
        <taxon>Candidatus Solibacter</taxon>
    </lineage>
</organism>
<accession>Q02A20</accession>
<feature type="chain" id="PRO_0000354936" description="Catalase-peroxidase">
    <location>
        <begin position="1"/>
        <end position="743"/>
    </location>
</feature>
<feature type="region of interest" description="Disordered" evidence="2">
    <location>
        <begin position="1"/>
        <end position="22"/>
    </location>
</feature>
<feature type="active site" description="Proton acceptor" evidence="1">
    <location>
        <position position="106"/>
    </location>
</feature>
<feature type="binding site" description="axial binding residue" evidence="1">
    <location>
        <position position="268"/>
    </location>
    <ligand>
        <name>heme b</name>
        <dbReference type="ChEBI" id="CHEBI:60344"/>
    </ligand>
    <ligandPart>
        <name>Fe</name>
        <dbReference type="ChEBI" id="CHEBI:18248"/>
    </ligandPart>
</feature>
<feature type="site" description="Transition state stabilizer" evidence="1">
    <location>
        <position position="102"/>
    </location>
</feature>
<feature type="cross-link" description="Tryptophyl-tyrosyl-methioninium (Trp-Tyr) (with M-253)" evidence="1">
    <location>
        <begin position="105"/>
        <end position="227"/>
    </location>
</feature>
<feature type="cross-link" description="Tryptophyl-tyrosyl-methioninium (Tyr-Met) (with W-105)" evidence="1">
    <location>
        <begin position="227"/>
        <end position="253"/>
    </location>
</feature>
<evidence type="ECO:0000255" key="1">
    <source>
        <dbReference type="HAMAP-Rule" id="MF_01961"/>
    </source>
</evidence>
<evidence type="ECO:0000256" key="2">
    <source>
        <dbReference type="SAM" id="MobiDB-lite"/>
    </source>
</evidence>
<proteinExistence type="inferred from homology"/>
<protein>
    <recommendedName>
        <fullName evidence="1">Catalase-peroxidase</fullName>
        <shortName evidence="1">CP</shortName>
        <ecNumber evidence="1">1.11.1.21</ecNumber>
    </recommendedName>
    <alternativeName>
        <fullName evidence="1">Peroxidase/catalase</fullName>
    </alternativeName>
</protein>
<name>KATG_SOLUE</name>
<comment type="function">
    <text evidence="1">Bifunctional enzyme with both catalase and broad-spectrum peroxidase activity.</text>
</comment>
<comment type="catalytic activity">
    <reaction evidence="1">
        <text>H2O2 + AH2 = A + 2 H2O</text>
        <dbReference type="Rhea" id="RHEA:30275"/>
        <dbReference type="ChEBI" id="CHEBI:13193"/>
        <dbReference type="ChEBI" id="CHEBI:15377"/>
        <dbReference type="ChEBI" id="CHEBI:16240"/>
        <dbReference type="ChEBI" id="CHEBI:17499"/>
        <dbReference type="EC" id="1.11.1.21"/>
    </reaction>
</comment>
<comment type="catalytic activity">
    <reaction evidence="1">
        <text>2 H2O2 = O2 + 2 H2O</text>
        <dbReference type="Rhea" id="RHEA:20309"/>
        <dbReference type="ChEBI" id="CHEBI:15377"/>
        <dbReference type="ChEBI" id="CHEBI:15379"/>
        <dbReference type="ChEBI" id="CHEBI:16240"/>
        <dbReference type="EC" id="1.11.1.21"/>
    </reaction>
</comment>
<comment type="cofactor">
    <cofactor evidence="1">
        <name>heme b</name>
        <dbReference type="ChEBI" id="CHEBI:60344"/>
    </cofactor>
    <text evidence="1">Binds 1 heme b (iron(II)-protoporphyrin IX) group per dimer.</text>
</comment>
<comment type="subunit">
    <text evidence="1">Homodimer or homotetramer.</text>
</comment>
<comment type="PTM">
    <text evidence="1">Formation of the three residue Trp-Tyr-Met cross-link is important for the catalase, but not the peroxidase activity of the enzyme.</text>
</comment>
<comment type="similarity">
    <text evidence="1">Belongs to the peroxidase family. Peroxidase/catalase subfamily.</text>
</comment>
<gene>
    <name evidence="1" type="primary">katG</name>
    <name type="ordered locus">Acid_1112</name>
</gene>
<dbReference type="EC" id="1.11.1.21" evidence="1"/>
<dbReference type="EMBL" id="CP000473">
    <property type="protein sequence ID" value="ABJ82106.1"/>
    <property type="molecule type" value="Genomic_DNA"/>
</dbReference>
<dbReference type="SMR" id="Q02A20"/>
<dbReference type="FunCoup" id="Q02A20">
    <property type="interactions" value="258"/>
</dbReference>
<dbReference type="STRING" id="234267.Acid_1112"/>
<dbReference type="KEGG" id="sus:Acid_1112"/>
<dbReference type="eggNOG" id="COG0376">
    <property type="taxonomic scope" value="Bacteria"/>
</dbReference>
<dbReference type="HOGENOM" id="CLU_025424_2_0_0"/>
<dbReference type="InParanoid" id="Q02A20"/>
<dbReference type="OrthoDB" id="9759743at2"/>
<dbReference type="GO" id="GO:0005829">
    <property type="term" value="C:cytosol"/>
    <property type="evidence" value="ECO:0007669"/>
    <property type="project" value="TreeGrafter"/>
</dbReference>
<dbReference type="GO" id="GO:0004096">
    <property type="term" value="F:catalase activity"/>
    <property type="evidence" value="ECO:0007669"/>
    <property type="project" value="UniProtKB-UniRule"/>
</dbReference>
<dbReference type="GO" id="GO:0020037">
    <property type="term" value="F:heme binding"/>
    <property type="evidence" value="ECO:0007669"/>
    <property type="project" value="InterPro"/>
</dbReference>
<dbReference type="GO" id="GO:0046872">
    <property type="term" value="F:metal ion binding"/>
    <property type="evidence" value="ECO:0007669"/>
    <property type="project" value="UniProtKB-KW"/>
</dbReference>
<dbReference type="GO" id="GO:0070301">
    <property type="term" value="P:cellular response to hydrogen peroxide"/>
    <property type="evidence" value="ECO:0007669"/>
    <property type="project" value="TreeGrafter"/>
</dbReference>
<dbReference type="GO" id="GO:0042744">
    <property type="term" value="P:hydrogen peroxide catabolic process"/>
    <property type="evidence" value="ECO:0007669"/>
    <property type="project" value="UniProtKB-KW"/>
</dbReference>
<dbReference type="CDD" id="cd00649">
    <property type="entry name" value="catalase_peroxidase_1"/>
    <property type="match status" value="1"/>
</dbReference>
<dbReference type="CDD" id="cd08200">
    <property type="entry name" value="catalase_peroxidase_2"/>
    <property type="match status" value="1"/>
</dbReference>
<dbReference type="FunFam" id="1.10.420.10:FF:000002">
    <property type="entry name" value="Catalase-peroxidase"/>
    <property type="match status" value="1"/>
</dbReference>
<dbReference type="FunFam" id="1.10.420.10:FF:000004">
    <property type="entry name" value="Catalase-peroxidase"/>
    <property type="match status" value="1"/>
</dbReference>
<dbReference type="FunFam" id="1.10.520.10:FF:000002">
    <property type="entry name" value="Catalase-peroxidase"/>
    <property type="match status" value="1"/>
</dbReference>
<dbReference type="Gene3D" id="1.10.520.10">
    <property type="match status" value="2"/>
</dbReference>
<dbReference type="Gene3D" id="1.10.420.10">
    <property type="entry name" value="Peroxidase, domain 2"/>
    <property type="match status" value="2"/>
</dbReference>
<dbReference type="HAMAP" id="MF_01961">
    <property type="entry name" value="Catal_peroxid"/>
    <property type="match status" value="1"/>
</dbReference>
<dbReference type="InterPro" id="IPR000763">
    <property type="entry name" value="Catalase_peroxidase"/>
</dbReference>
<dbReference type="InterPro" id="IPR002016">
    <property type="entry name" value="Haem_peroxidase"/>
</dbReference>
<dbReference type="InterPro" id="IPR010255">
    <property type="entry name" value="Haem_peroxidase_sf"/>
</dbReference>
<dbReference type="InterPro" id="IPR019794">
    <property type="entry name" value="Peroxidases_AS"/>
</dbReference>
<dbReference type="InterPro" id="IPR019793">
    <property type="entry name" value="Peroxidases_heam-ligand_BS"/>
</dbReference>
<dbReference type="NCBIfam" id="TIGR00198">
    <property type="entry name" value="cat_per_HPI"/>
    <property type="match status" value="1"/>
</dbReference>
<dbReference type="NCBIfam" id="NF011635">
    <property type="entry name" value="PRK15061.1"/>
    <property type="match status" value="1"/>
</dbReference>
<dbReference type="PANTHER" id="PTHR30555:SF0">
    <property type="entry name" value="CATALASE-PEROXIDASE"/>
    <property type="match status" value="1"/>
</dbReference>
<dbReference type="PANTHER" id="PTHR30555">
    <property type="entry name" value="HYDROPEROXIDASE I, BIFUNCTIONAL CATALASE-PEROXIDASE"/>
    <property type="match status" value="1"/>
</dbReference>
<dbReference type="Pfam" id="PF00141">
    <property type="entry name" value="peroxidase"/>
    <property type="match status" value="2"/>
</dbReference>
<dbReference type="PRINTS" id="PR00460">
    <property type="entry name" value="BPEROXIDASE"/>
</dbReference>
<dbReference type="PRINTS" id="PR00458">
    <property type="entry name" value="PEROXIDASE"/>
</dbReference>
<dbReference type="SUPFAM" id="SSF48113">
    <property type="entry name" value="Heme-dependent peroxidases"/>
    <property type="match status" value="2"/>
</dbReference>
<dbReference type="PROSITE" id="PS00435">
    <property type="entry name" value="PEROXIDASE_1"/>
    <property type="match status" value="1"/>
</dbReference>
<dbReference type="PROSITE" id="PS00436">
    <property type="entry name" value="PEROXIDASE_2"/>
    <property type="match status" value="1"/>
</dbReference>
<dbReference type="PROSITE" id="PS50873">
    <property type="entry name" value="PEROXIDASE_4"/>
    <property type="match status" value="2"/>
</dbReference>
<keyword id="KW-0349">Heme</keyword>
<keyword id="KW-0376">Hydrogen peroxide</keyword>
<keyword id="KW-0408">Iron</keyword>
<keyword id="KW-0479">Metal-binding</keyword>
<keyword id="KW-0560">Oxidoreductase</keyword>
<keyword id="KW-0575">Peroxidase</keyword>